<comment type="function">
    <text evidence="1">Part of a membrane-bound complex that couples electron transfer with translocation of ions across the membrane.</text>
</comment>
<comment type="cofactor">
    <cofactor evidence="1">
        <name>[4Fe-4S] cluster</name>
        <dbReference type="ChEBI" id="CHEBI:49883"/>
    </cofactor>
    <text evidence="1">Binds 3 [4Fe-4S] clusters.</text>
</comment>
<comment type="subunit">
    <text evidence="1">The complex is composed of six subunits: RnfA, RnfB, RnfC, RnfD, RnfE and RnfG.</text>
</comment>
<comment type="subcellular location">
    <subcellularLocation>
        <location evidence="1">Cell inner membrane</location>
    </subcellularLocation>
</comment>
<comment type="similarity">
    <text evidence="1">Belongs to the 4Fe4S bacterial-type ferredoxin family. RnfB subfamily.</text>
</comment>
<dbReference type="EC" id="7.-.-.-" evidence="1"/>
<dbReference type="EMBL" id="L42023">
    <property type="protein sequence ID" value="AAC23330.1"/>
    <property type="molecule type" value="Genomic_DNA"/>
</dbReference>
<dbReference type="PIR" id="H64174">
    <property type="entry name" value="H64174"/>
</dbReference>
<dbReference type="RefSeq" id="NP_439826.1">
    <property type="nucleotide sequence ID" value="NC_000907.1"/>
</dbReference>
<dbReference type="STRING" id="71421.HI_1684"/>
<dbReference type="EnsemblBacteria" id="AAC23330">
    <property type="protein sequence ID" value="AAC23330"/>
    <property type="gene ID" value="HI_1684"/>
</dbReference>
<dbReference type="KEGG" id="hin:HI_1684"/>
<dbReference type="PATRIC" id="fig|71421.8.peg.1763"/>
<dbReference type="eggNOG" id="COG2878">
    <property type="taxonomic scope" value="Bacteria"/>
</dbReference>
<dbReference type="HOGENOM" id="CLU_063448_2_0_6"/>
<dbReference type="OrthoDB" id="9789936at2"/>
<dbReference type="PhylomeDB" id="P71396"/>
<dbReference type="BioCyc" id="HINF71421:G1GJ1-1700-MONOMER"/>
<dbReference type="Proteomes" id="UP000000579">
    <property type="component" value="Chromosome"/>
</dbReference>
<dbReference type="GO" id="GO:0005886">
    <property type="term" value="C:plasma membrane"/>
    <property type="evidence" value="ECO:0007669"/>
    <property type="project" value="UniProtKB-SubCell"/>
</dbReference>
<dbReference type="GO" id="GO:0051539">
    <property type="term" value="F:4 iron, 4 sulfur cluster binding"/>
    <property type="evidence" value="ECO:0007669"/>
    <property type="project" value="UniProtKB-UniRule"/>
</dbReference>
<dbReference type="GO" id="GO:0009055">
    <property type="term" value="F:electron transfer activity"/>
    <property type="evidence" value="ECO:0007669"/>
    <property type="project" value="InterPro"/>
</dbReference>
<dbReference type="GO" id="GO:0046872">
    <property type="term" value="F:metal ion binding"/>
    <property type="evidence" value="ECO:0007669"/>
    <property type="project" value="UniProtKB-KW"/>
</dbReference>
<dbReference type="GO" id="GO:0022900">
    <property type="term" value="P:electron transport chain"/>
    <property type="evidence" value="ECO:0007669"/>
    <property type="project" value="UniProtKB-UniRule"/>
</dbReference>
<dbReference type="FunFam" id="1.10.15.40:FF:000001">
    <property type="entry name" value="Ion-translocating oxidoreductase complex subunit B"/>
    <property type="match status" value="1"/>
</dbReference>
<dbReference type="Gene3D" id="3.30.70.20">
    <property type="match status" value="2"/>
</dbReference>
<dbReference type="Gene3D" id="1.10.15.40">
    <property type="entry name" value="Electron transport complex subunit B, putative Fe-S cluster"/>
    <property type="match status" value="1"/>
</dbReference>
<dbReference type="HAMAP" id="MF_00463">
    <property type="entry name" value="RsxB_RnfB"/>
    <property type="match status" value="1"/>
</dbReference>
<dbReference type="InterPro" id="IPR007202">
    <property type="entry name" value="4Fe-4S_dom"/>
</dbReference>
<dbReference type="InterPro" id="IPR017896">
    <property type="entry name" value="4Fe4S_Fe-S-bd"/>
</dbReference>
<dbReference type="InterPro" id="IPR017900">
    <property type="entry name" value="4Fe4S_Fe_S_CS"/>
</dbReference>
<dbReference type="InterPro" id="IPR010207">
    <property type="entry name" value="Elect_transpt_cplx_RnfB/RsxB"/>
</dbReference>
<dbReference type="InterPro" id="IPR016463">
    <property type="entry name" value="RnfB/RsxB_Proteobac"/>
</dbReference>
<dbReference type="InterPro" id="IPR050294">
    <property type="entry name" value="RnfB_subfamily"/>
</dbReference>
<dbReference type="NCBIfam" id="NF003475">
    <property type="entry name" value="PRK05113.1"/>
    <property type="match status" value="1"/>
</dbReference>
<dbReference type="NCBIfam" id="TIGR01944">
    <property type="entry name" value="rnfB"/>
    <property type="match status" value="1"/>
</dbReference>
<dbReference type="PANTHER" id="PTHR42859:SF3">
    <property type="entry name" value="ION-TRANSLOCATING OXIDOREDUCTASE COMPLEX SUBUNIT B"/>
    <property type="match status" value="1"/>
</dbReference>
<dbReference type="PANTHER" id="PTHR42859">
    <property type="entry name" value="OXIDOREDUCTASE"/>
    <property type="match status" value="1"/>
</dbReference>
<dbReference type="Pfam" id="PF14697">
    <property type="entry name" value="Fer4_21"/>
    <property type="match status" value="1"/>
</dbReference>
<dbReference type="Pfam" id="PF04060">
    <property type="entry name" value="FeS"/>
    <property type="match status" value="1"/>
</dbReference>
<dbReference type="PIRSF" id="PIRSF005784">
    <property type="entry name" value="Elect_transpt_RnfB"/>
    <property type="match status" value="1"/>
</dbReference>
<dbReference type="SUPFAM" id="SSF54862">
    <property type="entry name" value="4Fe-4S ferredoxins"/>
    <property type="match status" value="1"/>
</dbReference>
<dbReference type="PROSITE" id="PS51656">
    <property type="entry name" value="4FE4S"/>
    <property type="match status" value="1"/>
</dbReference>
<dbReference type="PROSITE" id="PS00198">
    <property type="entry name" value="4FE4S_FER_1"/>
    <property type="match status" value="2"/>
</dbReference>
<dbReference type="PROSITE" id="PS51379">
    <property type="entry name" value="4FE4S_FER_2"/>
    <property type="match status" value="2"/>
</dbReference>
<proteinExistence type="inferred from homology"/>
<keyword id="KW-0004">4Fe-4S</keyword>
<keyword id="KW-0997">Cell inner membrane</keyword>
<keyword id="KW-1003">Cell membrane</keyword>
<keyword id="KW-0249">Electron transport</keyword>
<keyword id="KW-0408">Iron</keyword>
<keyword id="KW-0411">Iron-sulfur</keyword>
<keyword id="KW-0472">Membrane</keyword>
<keyword id="KW-0479">Metal-binding</keyword>
<keyword id="KW-1185">Reference proteome</keyword>
<keyword id="KW-0677">Repeat</keyword>
<keyword id="KW-1278">Translocase</keyword>
<keyword id="KW-0813">Transport</keyword>
<protein>
    <recommendedName>
        <fullName evidence="1">Ion-translocating oxidoreductase complex subunit B</fullName>
        <ecNumber evidence="1">7.-.-.-</ecNumber>
    </recommendedName>
    <alternativeName>
        <fullName evidence="1">Rnf electron transport complex subunit B</fullName>
    </alternativeName>
</protein>
<reference key="1">
    <citation type="journal article" date="1995" name="Science">
        <title>Whole-genome random sequencing and assembly of Haemophilus influenzae Rd.</title>
        <authorList>
            <person name="Fleischmann R.D."/>
            <person name="Adams M.D."/>
            <person name="White O."/>
            <person name="Clayton R.A."/>
            <person name="Kirkness E.F."/>
            <person name="Kerlavage A.R."/>
            <person name="Bult C.J."/>
            <person name="Tomb J.-F."/>
            <person name="Dougherty B.A."/>
            <person name="Merrick J.M."/>
            <person name="McKenney K."/>
            <person name="Sutton G.G."/>
            <person name="FitzHugh W."/>
            <person name="Fields C.A."/>
            <person name="Gocayne J.D."/>
            <person name="Scott J.D."/>
            <person name="Shirley R."/>
            <person name="Liu L.-I."/>
            <person name="Glodek A."/>
            <person name="Kelley J.M."/>
            <person name="Weidman J.F."/>
            <person name="Phillips C.A."/>
            <person name="Spriggs T."/>
            <person name="Hedblom E."/>
            <person name="Cotton M.D."/>
            <person name="Utterback T.R."/>
            <person name="Hanna M.C."/>
            <person name="Nguyen D.T."/>
            <person name="Saudek D.M."/>
            <person name="Brandon R.C."/>
            <person name="Fine L.D."/>
            <person name="Fritchman J.L."/>
            <person name="Fuhrmann J.L."/>
            <person name="Geoghagen N.S.M."/>
            <person name="Gnehm C.L."/>
            <person name="McDonald L.A."/>
            <person name="Small K.V."/>
            <person name="Fraser C.M."/>
            <person name="Smith H.O."/>
            <person name="Venter J.C."/>
        </authorList>
    </citation>
    <scope>NUCLEOTIDE SEQUENCE [LARGE SCALE GENOMIC DNA]</scope>
    <source>
        <strain>ATCC 51907 / DSM 11121 / KW20 / Rd</strain>
    </source>
</reference>
<accession>P71396</accession>
<organism>
    <name type="scientific">Haemophilus influenzae (strain ATCC 51907 / DSM 11121 / KW20 / Rd)</name>
    <dbReference type="NCBI Taxonomy" id="71421"/>
    <lineage>
        <taxon>Bacteria</taxon>
        <taxon>Pseudomonadati</taxon>
        <taxon>Pseudomonadota</taxon>
        <taxon>Gammaproteobacteria</taxon>
        <taxon>Pasteurellales</taxon>
        <taxon>Pasteurellaceae</taxon>
        <taxon>Haemophilus</taxon>
    </lineage>
</organism>
<evidence type="ECO:0000255" key="1">
    <source>
        <dbReference type="HAMAP-Rule" id="MF_00463"/>
    </source>
</evidence>
<gene>
    <name evidence="1" type="primary">rnfB</name>
    <name type="ordered locus">HI_1684</name>
</gene>
<name>RNFB_HAEIN</name>
<feature type="chain" id="PRO_0000216274" description="Ion-translocating oxidoreductase complex subunit B">
    <location>
        <begin position="1"/>
        <end position="193"/>
    </location>
</feature>
<feature type="domain" description="4Fe-4S" evidence="1">
    <location>
        <begin position="29"/>
        <end position="87"/>
    </location>
</feature>
<feature type="domain" description="4Fe-4S ferredoxin-type 1" evidence="1">
    <location>
        <begin position="101"/>
        <end position="130"/>
    </location>
</feature>
<feature type="domain" description="4Fe-4S ferredoxin-type 2" evidence="1">
    <location>
        <begin position="131"/>
        <end position="160"/>
    </location>
</feature>
<feature type="region of interest" description="Hydrophobic" evidence="1">
    <location>
        <begin position="1"/>
        <end position="23"/>
    </location>
</feature>
<feature type="binding site" evidence="1">
    <location>
        <position position="46"/>
    </location>
    <ligand>
        <name>[4Fe-4S] cluster</name>
        <dbReference type="ChEBI" id="CHEBI:49883"/>
        <label>1</label>
    </ligand>
</feature>
<feature type="binding site" evidence="1">
    <location>
        <position position="49"/>
    </location>
    <ligand>
        <name>[4Fe-4S] cluster</name>
        <dbReference type="ChEBI" id="CHEBI:49883"/>
        <label>1</label>
    </ligand>
</feature>
<feature type="binding site" evidence="1">
    <location>
        <position position="54"/>
    </location>
    <ligand>
        <name>[4Fe-4S] cluster</name>
        <dbReference type="ChEBI" id="CHEBI:49883"/>
        <label>1</label>
    </ligand>
</feature>
<feature type="binding site" evidence="1">
    <location>
        <position position="70"/>
    </location>
    <ligand>
        <name>[4Fe-4S] cluster</name>
        <dbReference type="ChEBI" id="CHEBI:49883"/>
        <label>1</label>
    </ligand>
</feature>
<feature type="binding site" evidence="1">
    <location>
        <position position="110"/>
    </location>
    <ligand>
        <name>[4Fe-4S] cluster</name>
        <dbReference type="ChEBI" id="CHEBI:49883"/>
        <label>2</label>
    </ligand>
</feature>
<feature type="binding site" evidence="1">
    <location>
        <position position="113"/>
    </location>
    <ligand>
        <name>[4Fe-4S] cluster</name>
        <dbReference type="ChEBI" id="CHEBI:49883"/>
        <label>2</label>
    </ligand>
</feature>
<feature type="binding site" evidence="1">
    <location>
        <position position="116"/>
    </location>
    <ligand>
        <name>[4Fe-4S] cluster</name>
        <dbReference type="ChEBI" id="CHEBI:49883"/>
        <label>2</label>
    </ligand>
</feature>
<feature type="binding site" evidence="1">
    <location>
        <position position="120"/>
    </location>
    <ligand>
        <name>[4Fe-4S] cluster</name>
        <dbReference type="ChEBI" id="CHEBI:49883"/>
        <label>3</label>
    </ligand>
</feature>
<feature type="binding site" evidence="1">
    <location>
        <position position="140"/>
    </location>
    <ligand>
        <name>[4Fe-4S] cluster</name>
        <dbReference type="ChEBI" id="CHEBI:49883"/>
        <label>3</label>
    </ligand>
</feature>
<feature type="binding site" evidence="1">
    <location>
        <position position="143"/>
    </location>
    <ligand>
        <name>[4Fe-4S] cluster</name>
        <dbReference type="ChEBI" id="CHEBI:49883"/>
        <label>3</label>
    </ligand>
</feature>
<feature type="binding site" evidence="1">
    <location>
        <position position="146"/>
    </location>
    <ligand>
        <name>[4Fe-4S] cluster</name>
        <dbReference type="ChEBI" id="CHEBI:49883"/>
        <label>3</label>
    </ligand>
</feature>
<feature type="binding site" evidence="1">
    <location>
        <position position="150"/>
    </location>
    <ligand>
        <name>[4Fe-4S] cluster</name>
        <dbReference type="ChEBI" id="CHEBI:49883"/>
        <label>2</label>
    </ligand>
</feature>
<sequence length="193" mass="20762">MTFLFIVITLLALIFGAILGFASIKLKVEADPVVEKIDAILPQSQCGQCGYPGCKPYAEAICNGDEITKCIPGGQTTIVKIAEILGVDVPTMEGIEEPIEKVAFIDENMCIGCTKCIQACPVDAIIGTNKAMHTIIPDLCTGCELCVAPCPTDCILMIPVKKNIDNWDWKFDAKLVIPVMNVDGSEKKLVVGE</sequence>